<evidence type="ECO:0000255" key="1">
    <source>
        <dbReference type="HAMAP-Rule" id="MF_00715"/>
    </source>
</evidence>
<reference key="1">
    <citation type="journal article" date="2003" name="J. Bacteriol.">
        <title>Comparative analyses of the complete genome sequences of Pierce's disease and citrus variegated chlorosis strains of Xylella fastidiosa.</title>
        <authorList>
            <person name="Van Sluys M.A."/>
            <person name="de Oliveira M.C."/>
            <person name="Monteiro-Vitorello C.B."/>
            <person name="Miyaki C.Y."/>
            <person name="Furlan L.R."/>
            <person name="Camargo L.E.A."/>
            <person name="da Silva A.C.R."/>
            <person name="Moon D.H."/>
            <person name="Takita M.A."/>
            <person name="Lemos E.G.M."/>
            <person name="Machado M.A."/>
            <person name="Ferro M.I.T."/>
            <person name="da Silva F.R."/>
            <person name="Goldman M.H.S."/>
            <person name="Goldman G.H."/>
            <person name="Lemos M.V.F."/>
            <person name="El-Dorry H."/>
            <person name="Tsai S.M."/>
            <person name="Carrer H."/>
            <person name="Carraro D.M."/>
            <person name="de Oliveira R.C."/>
            <person name="Nunes L.R."/>
            <person name="Siqueira W.J."/>
            <person name="Coutinho L.L."/>
            <person name="Kimura E.T."/>
            <person name="Ferro E.S."/>
            <person name="Harakava R."/>
            <person name="Kuramae E.E."/>
            <person name="Marino C.L."/>
            <person name="Giglioti E."/>
            <person name="Abreu I.L."/>
            <person name="Alves L.M.C."/>
            <person name="do Amaral A.M."/>
            <person name="Baia G.S."/>
            <person name="Blanco S.R."/>
            <person name="Brito M.S."/>
            <person name="Cannavan F.S."/>
            <person name="Celestino A.V."/>
            <person name="da Cunha A.F."/>
            <person name="Fenille R.C."/>
            <person name="Ferro J.A."/>
            <person name="Formighieri E.F."/>
            <person name="Kishi L.T."/>
            <person name="Leoni S.G."/>
            <person name="Oliveira A.R."/>
            <person name="Rosa V.E. Jr."/>
            <person name="Sassaki F.T."/>
            <person name="Sena J.A.D."/>
            <person name="de Souza A.A."/>
            <person name="Truffi D."/>
            <person name="Tsukumo F."/>
            <person name="Yanai G.M."/>
            <person name="Zaros L.G."/>
            <person name="Civerolo E.L."/>
            <person name="Simpson A.J.G."/>
            <person name="Almeida N.F. Jr."/>
            <person name="Setubal J.C."/>
            <person name="Kitajima J.P."/>
        </authorList>
    </citation>
    <scope>NUCLEOTIDE SEQUENCE [LARGE SCALE GENOMIC DNA]</scope>
    <source>
        <strain>Temecula1 / ATCC 700964</strain>
    </source>
</reference>
<name>SLYX_XYLFT</name>
<keyword id="KW-1185">Reference proteome</keyword>
<sequence>MHEKLLTLCDCAFEARLIELEMRVSFQEQALTEISEALAETRLIGARNAELMRHLLEELGKVRNTLYEHPIDEPPPHY</sequence>
<proteinExistence type="inferred from homology"/>
<protein>
    <recommendedName>
        <fullName evidence="1">Protein SlyX homolog</fullName>
    </recommendedName>
</protein>
<dbReference type="EMBL" id="AE009442">
    <property type="protein sequence ID" value="AAO29019.1"/>
    <property type="molecule type" value="Genomic_DNA"/>
</dbReference>
<dbReference type="RefSeq" id="WP_004087333.1">
    <property type="nucleotide sequence ID" value="NC_004556.1"/>
</dbReference>
<dbReference type="SMR" id="Q87CB7"/>
<dbReference type="KEGG" id="xft:PD_1166"/>
<dbReference type="HOGENOM" id="CLU_180796_4_2_6"/>
<dbReference type="Proteomes" id="UP000002516">
    <property type="component" value="Chromosome"/>
</dbReference>
<dbReference type="Gene3D" id="1.20.5.300">
    <property type="match status" value="1"/>
</dbReference>
<dbReference type="HAMAP" id="MF_00715">
    <property type="entry name" value="SlyX"/>
    <property type="match status" value="1"/>
</dbReference>
<dbReference type="InterPro" id="IPR007236">
    <property type="entry name" value="SlyX"/>
</dbReference>
<dbReference type="NCBIfam" id="NF002024">
    <property type="entry name" value="PRK00846.1"/>
    <property type="match status" value="1"/>
</dbReference>
<dbReference type="PANTHER" id="PTHR36508">
    <property type="entry name" value="PROTEIN SLYX"/>
    <property type="match status" value="1"/>
</dbReference>
<dbReference type="PANTHER" id="PTHR36508:SF1">
    <property type="entry name" value="PROTEIN SLYX"/>
    <property type="match status" value="1"/>
</dbReference>
<dbReference type="Pfam" id="PF04102">
    <property type="entry name" value="SlyX"/>
    <property type="match status" value="1"/>
</dbReference>
<organism>
    <name type="scientific">Xylella fastidiosa (strain Temecula1 / ATCC 700964)</name>
    <dbReference type="NCBI Taxonomy" id="183190"/>
    <lineage>
        <taxon>Bacteria</taxon>
        <taxon>Pseudomonadati</taxon>
        <taxon>Pseudomonadota</taxon>
        <taxon>Gammaproteobacteria</taxon>
        <taxon>Lysobacterales</taxon>
        <taxon>Lysobacteraceae</taxon>
        <taxon>Xylella</taxon>
    </lineage>
</organism>
<feature type="chain" id="PRO_0000209223" description="Protein SlyX homolog">
    <location>
        <begin position="1"/>
        <end position="78"/>
    </location>
</feature>
<gene>
    <name evidence="1" type="primary">slyX</name>
    <name type="ordered locus">PD_1166</name>
</gene>
<accession>Q87CB7</accession>
<comment type="similarity">
    <text evidence="1">Belongs to the SlyX family.</text>
</comment>